<proteinExistence type="inferred from homology"/>
<accession>Q8KAK5</accession>
<protein>
    <recommendedName>
        <fullName evidence="1">Probable GTP-binding protein EngB</fullName>
    </recommendedName>
</protein>
<keyword id="KW-0131">Cell cycle</keyword>
<keyword id="KW-0132">Cell division</keyword>
<keyword id="KW-0342">GTP-binding</keyword>
<keyword id="KW-0460">Magnesium</keyword>
<keyword id="KW-0479">Metal-binding</keyword>
<keyword id="KW-0547">Nucleotide-binding</keyword>
<keyword id="KW-1185">Reference proteome</keyword>
<keyword id="KW-0717">Septation</keyword>
<feature type="chain" id="PRO_0000157744" description="Probable GTP-binding protein EngB">
    <location>
        <begin position="1"/>
        <end position="192"/>
    </location>
</feature>
<feature type="domain" description="EngB-type G" evidence="1">
    <location>
        <begin position="22"/>
        <end position="192"/>
    </location>
</feature>
<feature type="binding site" evidence="1">
    <location>
        <begin position="30"/>
        <end position="37"/>
    </location>
    <ligand>
        <name>GTP</name>
        <dbReference type="ChEBI" id="CHEBI:37565"/>
    </ligand>
</feature>
<feature type="binding site" evidence="1">
    <location>
        <position position="37"/>
    </location>
    <ligand>
        <name>Mg(2+)</name>
        <dbReference type="ChEBI" id="CHEBI:18420"/>
    </ligand>
</feature>
<feature type="binding site" evidence="1">
    <location>
        <begin position="57"/>
        <end position="61"/>
    </location>
    <ligand>
        <name>GTP</name>
        <dbReference type="ChEBI" id="CHEBI:37565"/>
    </ligand>
</feature>
<feature type="binding site" evidence="1">
    <location>
        <position position="59"/>
    </location>
    <ligand>
        <name>Mg(2+)</name>
        <dbReference type="ChEBI" id="CHEBI:18420"/>
    </ligand>
</feature>
<feature type="binding site" evidence="1">
    <location>
        <begin position="75"/>
        <end position="78"/>
    </location>
    <ligand>
        <name>GTP</name>
        <dbReference type="ChEBI" id="CHEBI:37565"/>
    </ligand>
</feature>
<feature type="binding site" evidence="1">
    <location>
        <begin position="142"/>
        <end position="145"/>
    </location>
    <ligand>
        <name>GTP</name>
        <dbReference type="ChEBI" id="CHEBI:37565"/>
    </ligand>
</feature>
<feature type="binding site" evidence="1">
    <location>
        <begin position="172"/>
        <end position="174"/>
    </location>
    <ligand>
        <name>GTP</name>
        <dbReference type="ChEBI" id="CHEBI:37565"/>
    </ligand>
</feature>
<evidence type="ECO:0000255" key="1">
    <source>
        <dbReference type="HAMAP-Rule" id="MF_00321"/>
    </source>
</evidence>
<reference key="1">
    <citation type="journal article" date="2002" name="Proc. Natl. Acad. Sci. U.S.A.">
        <title>The complete genome sequence of Chlorobium tepidum TLS, a photosynthetic, anaerobic, green-sulfur bacterium.</title>
        <authorList>
            <person name="Eisen J.A."/>
            <person name="Nelson K.E."/>
            <person name="Paulsen I.T."/>
            <person name="Heidelberg J.F."/>
            <person name="Wu M."/>
            <person name="Dodson R.J."/>
            <person name="DeBoy R.T."/>
            <person name="Gwinn M.L."/>
            <person name="Nelson W.C."/>
            <person name="Haft D.H."/>
            <person name="Hickey E.K."/>
            <person name="Peterson J.D."/>
            <person name="Durkin A.S."/>
            <person name="Kolonay J.F."/>
            <person name="Yang F."/>
            <person name="Holt I.E."/>
            <person name="Umayam L.A."/>
            <person name="Mason T.M."/>
            <person name="Brenner M."/>
            <person name="Shea T.P."/>
            <person name="Parksey D.S."/>
            <person name="Nierman W.C."/>
            <person name="Feldblyum T.V."/>
            <person name="Hansen C.L."/>
            <person name="Craven M.B."/>
            <person name="Radune D."/>
            <person name="Vamathevan J.J."/>
            <person name="Khouri H.M."/>
            <person name="White O."/>
            <person name="Gruber T.M."/>
            <person name="Ketchum K.A."/>
            <person name="Venter J.C."/>
            <person name="Tettelin H."/>
            <person name="Bryant D.A."/>
            <person name="Fraser C.M."/>
        </authorList>
    </citation>
    <scope>NUCLEOTIDE SEQUENCE [LARGE SCALE GENOMIC DNA]</scope>
    <source>
        <strain>ATCC 49652 / DSM 12025 / NBRC 103806 / TLS</strain>
    </source>
</reference>
<sequence>MNITTADFFCSYSSLNGLPSDGRPEIVFVGRSNVGKSSLLNSLCARKGLAKTSSTPGKTRLINYFIINDNLYFVDLPGYGYAKVGQGERESWGKLLTGYIQKRGEIALVVLLVDSRHPGMASDLEMMEFLDYCGRPFGIVLTKWDKLKQAEKSKASRTIESCAPNARFIVNYSSLSGSGRDRLLASIDTFTQ</sequence>
<gene>
    <name evidence="1" type="primary">engB</name>
    <name type="ordered locus">CT2155</name>
</gene>
<name>ENGB_CHLTE</name>
<organism>
    <name type="scientific">Chlorobaculum tepidum (strain ATCC 49652 / DSM 12025 / NBRC 103806 / TLS)</name>
    <name type="common">Chlorobium tepidum</name>
    <dbReference type="NCBI Taxonomy" id="194439"/>
    <lineage>
        <taxon>Bacteria</taxon>
        <taxon>Pseudomonadati</taxon>
        <taxon>Chlorobiota</taxon>
        <taxon>Chlorobiia</taxon>
        <taxon>Chlorobiales</taxon>
        <taxon>Chlorobiaceae</taxon>
        <taxon>Chlorobaculum</taxon>
    </lineage>
</organism>
<dbReference type="EMBL" id="AE006470">
    <property type="protein sequence ID" value="AAM73371.1"/>
    <property type="molecule type" value="Genomic_DNA"/>
</dbReference>
<dbReference type="RefSeq" id="NP_663029.1">
    <property type="nucleotide sequence ID" value="NC_002932.3"/>
</dbReference>
<dbReference type="RefSeq" id="WP_010933808.1">
    <property type="nucleotide sequence ID" value="NC_002932.3"/>
</dbReference>
<dbReference type="SMR" id="Q8KAK5"/>
<dbReference type="STRING" id="194439.CT2155"/>
<dbReference type="EnsemblBacteria" id="AAM73371">
    <property type="protein sequence ID" value="AAM73371"/>
    <property type="gene ID" value="CT2155"/>
</dbReference>
<dbReference type="KEGG" id="cte:CT2155"/>
<dbReference type="PATRIC" id="fig|194439.7.peg.1955"/>
<dbReference type="eggNOG" id="COG0218">
    <property type="taxonomic scope" value="Bacteria"/>
</dbReference>
<dbReference type="HOGENOM" id="CLU_033732_3_0_10"/>
<dbReference type="OrthoDB" id="9804921at2"/>
<dbReference type="Proteomes" id="UP000001007">
    <property type="component" value="Chromosome"/>
</dbReference>
<dbReference type="GO" id="GO:0005829">
    <property type="term" value="C:cytosol"/>
    <property type="evidence" value="ECO:0007669"/>
    <property type="project" value="TreeGrafter"/>
</dbReference>
<dbReference type="GO" id="GO:0005525">
    <property type="term" value="F:GTP binding"/>
    <property type="evidence" value="ECO:0007669"/>
    <property type="project" value="UniProtKB-UniRule"/>
</dbReference>
<dbReference type="GO" id="GO:0046872">
    <property type="term" value="F:metal ion binding"/>
    <property type="evidence" value="ECO:0007669"/>
    <property type="project" value="UniProtKB-KW"/>
</dbReference>
<dbReference type="GO" id="GO:0000917">
    <property type="term" value="P:division septum assembly"/>
    <property type="evidence" value="ECO:0007669"/>
    <property type="project" value="UniProtKB-KW"/>
</dbReference>
<dbReference type="CDD" id="cd01876">
    <property type="entry name" value="YihA_EngB"/>
    <property type="match status" value="1"/>
</dbReference>
<dbReference type="Gene3D" id="3.40.50.300">
    <property type="entry name" value="P-loop containing nucleotide triphosphate hydrolases"/>
    <property type="match status" value="1"/>
</dbReference>
<dbReference type="HAMAP" id="MF_00321">
    <property type="entry name" value="GTPase_EngB"/>
    <property type="match status" value="1"/>
</dbReference>
<dbReference type="InterPro" id="IPR030393">
    <property type="entry name" value="G_ENGB_dom"/>
</dbReference>
<dbReference type="InterPro" id="IPR006073">
    <property type="entry name" value="GTP-bd"/>
</dbReference>
<dbReference type="InterPro" id="IPR019987">
    <property type="entry name" value="GTP-bd_ribosome_bio_YsxC"/>
</dbReference>
<dbReference type="InterPro" id="IPR027417">
    <property type="entry name" value="P-loop_NTPase"/>
</dbReference>
<dbReference type="NCBIfam" id="TIGR03598">
    <property type="entry name" value="GTPase_YsxC"/>
    <property type="match status" value="1"/>
</dbReference>
<dbReference type="PANTHER" id="PTHR11649:SF13">
    <property type="entry name" value="ENGB-TYPE G DOMAIN-CONTAINING PROTEIN"/>
    <property type="match status" value="1"/>
</dbReference>
<dbReference type="PANTHER" id="PTHR11649">
    <property type="entry name" value="MSS1/TRME-RELATED GTP-BINDING PROTEIN"/>
    <property type="match status" value="1"/>
</dbReference>
<dbReference type="Pfam" id="PF01926">
    <property type="entry name" value="MMR_HSR1"/>
    <property type="match status" value="1"/>
</dbReference>
<dbReference type="SUPFAM" id="SSF52540">
    <property type="entry name" value="P-loop containing nucleoside triphosphate hydrolases"/>
    <property type="match status" value="1"/>
</dbReference>
<dbReference type="PROSITE" id="PS51706">
    <property type="entry name" value="G_ENGB"/>
    <property type="match status" value="1"/>
</dbReference>
<comment type="function">
    <text evidence="1">Necessary for normal cell division and for the maintenance of normal septation.</text>
</comment>
<comment type="cofactor">
    <cofactor evidence="1">
        <name>Mg(2+)</name>
        <dbReference type="ChEBI" id="CHEBI:18420"/>
    </cofactor>
</comment>
<comment type="similarity">
    <text evidence="1">Belongs to the TRAFAC class TrmE-Era-EngA-EngB-Septin-like GTPase superfamily. EngB GTPase family.</text>
</comment>